<comment type="function">
    <text evidence="1">Nucleotidase with a broad substrate specificity as it can dephosphorylate various ribo- and deoxyribonucleoside 5'-monophosphates and ribonucleoside 3'-monophosphates with highest affinity to 3'-AMP. Also hydrolyzes polyphosphate (exopolyphosphatase activity) with the preference for short-chain-length substrates (P20-25). Might be involved in the regulation of dNTP and NTP pools, and in the turnover of 3'-mononucleotides produced by numerous intracellular RNases (T1, T2, and F) during the degradation of various RNAs.</text>
</comment>
<comment type="catalytic activity">
    <reaction evidence="1">
        <text>a ribonucleoside 5'-phosphate + H2O = a ribonucleoside + phosphate</text>
        <dbReference type="Rhea" id="RHEA:12484"/>
        <dbReference type="ChEBI" id="CHEBI:15377"/>
        <dbReference type="ChEBI" id="CHEBI:18254"/>
        <dbReference type="ChEBI" id="CHEBI:43474"/>
        <dbReference type="ChEBI" id="CHEBI:58043"/>
        <dbReference type="EC" id="3.1.3.5"/>
    </reaction>
</comment>
<comment type="catalytic activity">
    <reaction evidence="1">
        <text>a ribonucleoside 3'-phosphate + H2O = a ribonucleoside + phosphate</text>
        <dbReference type="Rhea" id="RHEA:10144"/>
        <dbReference type="ChEBI" id="CHEBI:13197"/>
        <dbReference type="ChEBI" id="CHEBI:15377"/>
        <dbReference type="ChEBI" id="CHEBI:18254"/>
        <dbReference type="ChEBI" id="CHEBI:43474"/>
        <dbReference type="EC" id="3.1.3.6"/>
    </reaction>
</comment>
<comment type="catalytic activity">
    <reaction evidence="1">
        <text>[phosphate](n) + H2O = [phosphate](n-1) + phosphate + H(+)</text>
        <dbReference type="Rhea" id="RHEA:21528"/>
        <dbReference type="Rhea" id="RHEA-COMP:9859"/>
        <dbReference type="Rhea" id="RHEA-COMP:14279"/>
        <dbReference type="ChEBI" id="CHEBI:15377"/>
        <dbReference type="ChEBI" id="CHEBI:15378"/>
        <dbReference type="ChEBI" id="CHEBI:16838"/>
        <dbReference type="ChEBI" id="CHEBI:43474"/>
        <dbReference type="EC" id="3.6.1.11"/>
    </reaction>
</comment>
<comment type="cofactor">
    <cofactor evidence="1">
        <name>a divalent metal cation</name>
        <dbReference type="ChEBI" id="CHEBI:60240"/>
    </cofactor>
    <text evidence="1">Binds 1 divalent metal cation per subunit.</text>
</comment>
<comment type="subcellular location">
    <subcellularLocation>
        <location evidence="1">Cytoplasm</location>
    </subcellularLocation>
</comment>
<comment type="similarity">
    <text evidence="1">Belongs to the SurE nucleotidase family.</text>
</comment>
<protein>
    <recommendedName>
        <fullName evidence="1">5'/3'-nucleotidase SurE</fullName>
        <ecNumber evidence="1">3.1.3.5</ecNumber>
        <ecNumber evidence="1">3.1.3.6</ecNumber>
    </recommendedName>
    <alternativeName>
        <fullName evidence="1">Exopolyphosphatase</fullName>
        <ecNumber evidence="1">3.6.1.11</ecNumber>
    </alternativeName>
    <alternativeName>
        <fullName evidence="1">Nucleoside monophosphate phosphohydrolase</fullName>
    </alternativeName>
</protein>
<proteinExistence type="inferred from homology"/>
<dbReference type="EC" id="3.1.3.5" evidence="1"/>
<dbReference type="EC" id="3.1.3.6" evidence="1"/>
<dbReference type="EC" id="3.6.1.11" evidence="1"/>
<dbReference type="EMBL" id="AL590842">
    <property type="protein sequence ID" value="CAL21947.1"/>
    <property type="molecule type" value="Genomic_DNA"/>
</dbReference>
<dbReference type="EMBL" id="AE009952">
    <property type="protein sequence ID" value="AAM84416.1"/>
    <property type="molecule type" value="Genomic_DNA"/>
</dbReference>
<dbReference type="EMBL" id="AE017042">
    <property type="protein sequence ID" value="AAS60602.1"/>
    <property type="molecule type" value="Genomic_DNA"/>
</dbReference>
<dbReference type="PIR" id="AH0407">
    <property type="entry name" value="AH0407"/>
</dbReference>
<dbReference type="RefSeq" id="WP_002209394.1">
    <property type="nucleotide sequence ID" value="NZ_WUCM01000008.1"/>
</dbReference>
<dbReference type="RefSeq" id="YP_002348251.1">
    <property type="nucleotide sequence ID" value="NC_003143.1"/>
</dbReference>
<dbReference type="SMR" id="Q8ZBP9"/>
<dbReference type="STRING" id="214092.YPO3358"/>
<dbReference type="PaxDb" id="214092-YPO3358"/>
<dbReference type="DNASU" id="1145778"/>
<dbReference type="EnsemblBacteria" id="AAS60602">
    <property type="protein sequence ID" value="AAS60602"/>
    <property type="gene ID" value="YP_0329"/>
</dbReference>
<dbReference type="GeneID" id="57975351"/>
<dbReference type="KEGG" id="ype:YPO3358"/>
<dbReference type="KEGG" id="ypk:y0831"/>
<dbReference type="KEGG" id="ypm:YP_0329"/>
<dbReference type="PATRIC" id="fig|214092.21.peg.3835"/>
<dbReference type="eggNOG" id="COG0496">
    <property type="taxonomic scope" value="Bacteria"/>
</dbReference>
<dbReference type="HOGENOM" id="CLU_045192_1_2_6"/>
<dbReference type="OMA" id="DCVHIAL"/>
<dbReference type="OrthoDB" id="9780815at2"/>
<dbReference type="Proteomes" id="UP000000815">
    <property type="component" value="Chromosome"/>
</dbReference>
<dbReference type="Proteomes" id="UP000001019">
    <property type="component" value="Chromosome"/>
</dbReference>
<dbReference type="Proteomes" id="UP000002490">
    <property type="component" value="Chromosome"/>
</dbReference>
<dbReference type="GO" id="GO:0005737">
    <property type="term" value="C:cytoplasm"/>
    <property type="evidence" value="ECO:0007669"/>
    <property type="project" value="UniProtKB-SubCell"/>
</dbReference>
<dbReference type="GO" id="GO:0008254">
    <property type="term" value="F:3'-nucleotidase activity"/>
    <property type="evidence" value="ECO:0000318"/>
    <property type="project" value="GO_Central"/>
</dbReference>
<dbReference type="GO" id="GO:0008253">
    <property type="term" value="F:5'-nucleotidase activity"/>
    <property type="evidence" value="ECO:0000318"/>
    <property type="project" value="GO_Central"/>
</dbReference>
<dbReference type="GO" id="GO:0004309">
    <property type="term" value="F:exopolyphosphatase activity"/>
    <property type="evidence" value="ECO:0000318"/>
    <property type="project" value="GO_Central"/>
</dbReference>
<dbReference type="GO" id="GO:0046872">
    <property type="term" value="F:metal ion binding"/>
    <property type="evidence" value="ECO:0007669"/>
    <property type="project" value="UniProtKB-UniRule"/>
</dbReference>
<dbReference type="GO" id="GO:0000166">
    <property type="term" value="F:nucleotide binding"/>
    <property type="evidence" value="ECO:0007669"/>
    <property type="project" value="UniProtKB-KW"/>
</dbReference>
<dbReference type="FunFam" id="3.40.1210.10:FF:000001">
    <property type="entry name" value="5'/3'-nucleotidase SurE"/>
    <property type="match status" value="1"/>
</dbReference>
<dbReference type="Gene3D" id="3.40.1210.10">
    <property type="entry name" value="Survival protein SurE-like phosphatase/nucleotidase"/>
    <property type="match status" value="1"/>
</dbReference>
<dbReference type="HAMAP" id="MF_00060">
    <property type="entry name" value="SurE"/>
    <property type="match status" value="1"/>
</dbReference>
<dbReference type="InterPro" id="IPR030048">
    <property type="entry name" value="SurE"/>
</dbReference>
<dbReference type="InterPro" id="IPR002828">
    <property type="entry name" value="SurE-like_Pase/nucleotidase"/>
</dbReference>
<dbReference type="InterPro" id="IPR036523">
    <property type="entry name" value="SurE-like_sf"/>
</dbReference>
<dbReference type="NCBIfam" id="NF001488">
    <property type="entry name" value="PRK00346.1-1"/>
    <property type="match status" value="1"/>
</dbReference>
<dbReference type="NCBIfam" id="NF001489">
    <property type="entry name" value="PRK00346.1-3"/>
    <property type="match status" value="1"/>
</dbReference>
<dbReference type="NCBIfam" id="NF001490">
    <property type="entry name" value="PRK00346.1-4"/>
    <property type="match status" value="1"/>
</dbReference>
<dbReference type="NCBIfam" id="TIGR00087">
    <property type="entry name" value="surE"/>
    <property type="match status" value="1"/>
</dbReference>
<dbReference type="PANTHER" id="PTHR30457">
    <property type="entry name" value="5'-NUCLEOTIDASE SURE"/>
    <property type="match status" value="1"/>
</dbReference>
<dbReference type="PANTHER" id="PTHR30457:SF12">
    <property type="entry name" value="5'_3'-NUCLEOTIDASE SURE"/>
    <property type="match status" value="1"/>
</dbReference>
<dbReference type="Pfam" id="PF01975">
    <property type="entry name" value="SurE"/>
    <property type="match status" value="1"/>
</dbReference>
<dbReference type="SUPFAM" id="SSF64167">
    <property type="entry name" value="SurE-like"/>
    <property type="match status" value="1"/>
</dbReference>
<name>SURE_YERPE</name>
<reference key="1">
    <citation type="journal article" date="2001" name="Nature">
        <title>Genome sequence of Yersinia pestis, the causative agent of plague.</title>
        <authorList>
            <person name="Parkhill J."/>
            <person name="Wren B.W."/>
            <person name="Thomson N.R."/>
            <person name="Titball R.W."/>
            <person name="Holden M.T.G."/>
            <person name="Prentice M.B."/>
            <person name="Sebaihia M."/>
            <person name="James K.D."/>
            <person name="Churcher C.M."/>
            <person name="Mungall K.L."/>
            <person name="Baker S."/>
            <person name="Basham D."/>
            <person name="Bentley S.D."/>
            <person name="Brooks K."/>
            <person name="Cerdeno-Tarraga A.-M."/>
            <person name="Chillingworth T."/>
            <person name="Cronin A."/>
            <person name="Davies R.M."/>
            <person name="Davis P."/>
            <person name="Dougan G."/>
            <person name="Feltwell T."/>
            <person name="Hamlin N."/>
            <person name="Holroyd S."/>
            <person name="Jagels K."/>
            <person name="Karlyshev A.V."/>
            <person name="Leather S."/>
            <person name="Moule S."/>
            <person name="Oyston P.C.F."/>
            <person name="Quail M.A."/>
            <person name="Rutherford K.M."/>
            <person name="Simmonds M."/>
            <person name="Skelton J."/>
            <person name="Stevens K."/>
            <person name="Whitehead S."/>
            <person name="Barrell B.G."/>
        </authorList>
    </citation>
    <scope>NUCLEOTIDE SEQUENCE [LARGE SCALE GENOMIC DNA]</scope>
    <source>
        <strain>CO-92 / Biovar Orientalis</strain>
    </source>
</reference>
<reference key="2">
    <citation type="journal article" date="2002" name="J. Bacteriol.">
        <title>Genome sequence of Yersinia pestis KIM.</title>
        <authorList>
            <person name="Deng W."/>
            <person name="Burland V."/>
            <person name="Plunkett G. III"/>
            <person name="Boutin A."/>
            <person name="Mayhew G.F."/>
            <person name="Liss P."/>
            <person name="Perna N.T."/>
            <person name="Rose D.J."/>
            <person name="Mau B."/>
            <person name="Zhou S."/>
            <person name="Schwartz D.C."/>
            <person name="Fetherston J.D."/>
            <person name="Lindler L.E."/>
            <person name="Brubaker R.R."/>
            <person name="Plano G.V."/>
            <person name="Straley S.C."/>
            <person name="McDonough K.A."/>
            <person name="Nilles M.L."/>
            <person name="Matson J.S."/>
            <person name="Blattner F.R."/>
            <person name="Perry R.D."/>
        </authorList>
    </citation>
    <scope>NUCLEOTIDE SEQUENCE [LARGE SCALE GENOMIC DNA]</scope>
    <source>
        <strain>KIM10+ / Biovar Mediaevalis</strain>
    </source>
</reference>
<reference key="3">
    <citation type="journal article" date="2004" name="DNA Res.">
        <title>Complete genome sequence of Yersinia pestis strain 91001, an isolate avirulent to humans.</title>
        <authorList>
            <person name="Song Y."/>
            <person name="Tong Z."/>
            <person name="Wang J."/>
            <person name="Wang L."/>
            <person name="Guo Z."/>
            <person name="Han Y."/>
            <person name="Zhang J."/>
            <person name="Pei D."/>
            <person name="Zhou D."/>
            <person name="Qin H."/>
            <person name="Pang X."/>
            <person name="Han Y."/>
            <person name="Zhai J."/>
            <person name="Li M."/>
            <person name="Cui B."/>
            <person name="Qi Z."/>
            <person name="Jin L."/>
            <person name="Dai R."/>
            <person name="Chen F."/>
            <person name="Li S."/>
            <person name="Ye C."/>
            <person name="Du Z."/>
            <person name="Lin W."/>
            <person name="Wang J."/>
            <person name="Yu J."/>
            <person name="Yang H."/>
            <person name="Wang J."/>
            <person name="Huang P."/>
            <person name="Yang R."/>
        </authorList>
    </citation>
    <scope>NUCLEOTIDE SEQUENCE [LARGE SCALE GENOMIC DNA]</scope>
    <source>
        <strain>91001 / Biovar Mediaevalis</strain>
    </source>
</reference>
<gene>
    <name evidence="1" type="primary">surE</name>
    <name type="ordered locus">YPO3358</name>
    <name type="ordered locus">y0831</name>
    <name type="ordered locus">YP_0329</name>
</gene>
<accession>Q8ZBP9</accession>
<accession>Q0WBT7</accession>
<evidence type="ECO:0000255" key="1">
    <source>
        <dbReference type="HAMAP-Rule" id="MF_00060"/>
    </source>
</evidence>
<feature type="chain" id="PRO_0000111859" description="5'/3'-nucleotidase SurE">
    <location>
        <begin position="1"/>
        <end position="254"/>
    </location>
</feature>
<feature type="binding site" evidence="1">
    <location>
        <position position="9"/>
    </location>
    <ligand>
        <name>a divalent metal cation</name>
        <dbReference type="ChEBI" id="CHEBI:60240"/>
    </ligand>
</feature>
<feature type="binding site" evidence="1">
    <location>
        <position position="10"/>
    </location>
    <ligand>
        <name>a divalent metal cation</name>
        <dbReference type="ChEBI" id="CHEBI:60240"/>
    </ligand>
</feature>
<feature type="binding site" evidence="1">
    <location>
        <position position="40"/>
    </location>
    <ligand>
        <name>a divalent metal cation</name>
        <dbReference type="ChEBI" id="CHEBI:60240"/>
    </ligand>
</feature>
<feature type="binding site" evidence="1">
    <location>
        <position position="93"/>
    </location>
    <ligand>
        <name>a divalent metal cation</name>
        <dbReference type="ChEBI" id="CHEBI:60240"/>
    </ligand>
</feature>
<organism>
    <name type="scientific">Yersinia pestis</name>
    <dbReference type="NCBI Taxonomy" id="632"/>
    <lineage>
        <taxon>Bacteria</taxon>
        <taxon>Pseudomonadati</taxon>
        <taxon>Pseudomonadota</taxon>
        <taxon>Gammaproteobacteria</taxon>
        <taxon>Enterobacterales</taxon>
        <taxon>Yersiniaceae</taxon>
        <taxon>Yersinia</taxon>
    </lineage>
</organism>
<sequence>MIRILLSNDDGISAPGIQTLASALRGFAQVQIVAPDRNRSGASNALTLDSALRITTLSNGDIAVQQGTPTDCVYLGVNALMRPRPDIVVSGINAGPNLGDDVIYSGTVAAAMEGRHLGYPALAVSLNGHQHYDTAAAVTCRLLRALQRKPLRTGKILNINVPDLPLAEIKGIRVTRCGSRHPAEQVFCQQDPRGQDLYWIGPPGEKYDAGPDTDFAAVEQGYVSITPLQVDLTAYMAQEVVESWLANTEVDGEW</sequence>
<keyword id="KW-0963">Cytoplasm</keyword>
<keyword id="KW-0378">Hydrolase</keyword>
<keyword id="KW-0479">Metal-binding</keyword>
<keyword id="KW-0547">Nucleotide-binding</keyword>
<keyword id="KW-1185">Reference proteome</keyword>